<reference key="1">
    <citation type="journal article" date="1989" name="Genes Dev.">
        <title>Overlapping genes of Drosophila melanogaster: organization of the z600-gonadal-Eip28/29 gene cluster.</title>
        <authorList>
            <person name="Schulz R.A."/>
            <person name="Butler B.A."/>
        </authorList>
    </citation>
    <scope>NUCLEOTIDE SEQUENCE [GENOMIC DNA]</scope>
    <scope>TISSUE SPECIFICITY</scope>
    <scope>DEVELOPMENTAL STAGE</scope>
    <source>
        <tissue>Embryo</tissue>
        <tissue>Ovary</tissue>
        <tissue>Testis</tissue>
    </source>
</reference>
<reference key="2">
    <citation type="journal article" date="2000" name="Science">
        <title>The genome sequence of Drosophila melanogaster.</title>
        <authorList>
            <person name="Adams M.D."/>
            <person name="Celniker S.E."/>
            <person name="Holt R.A."/>
            <person name="Evans C.A."/>
            <person name="Gocayne J.D."/>
            <person name="Amanatides P.G."/>
            <person name="Scherer S.E."/>
            <person name="Li P.W."/>
            <person name="Hoskins R.A."/>
            <person name="Galle R.F."/>
            <person name="George R.A."/>
            <person name="Lewis S.E."/>
            <person name="Richards S."/>
            <person name="Ashburner M."/>
            <person name="Henderson S.N."/>
            <person name="Sutton G.G."/>
            <person name="Wortman J.R."/>
            <person name="Yandell M.D."/>
            <person name="Zhang Q."/>
            <person name="Chen L.X."/>
            <person name="Brandon R.C."/>
            <person name="Rogers Y.-H.C."/>
            <person name="Blazej R.G."/>
            <person name="Champe M."/>
            <person name="Pfeiffer B.D."/>
            <person name="Wan K.H."/>
            <person name="Doyle C."/>
            <person name="Baxter E.G."/>
            <person name="Helt G."/>
            <person name="Nelson C.R."/>
            <person name="Miklos G.L.G."/>
            <person name="Abril J.F."/>
            <person name="Agbayani A."/>
            <person name="An H.-J."/>
            <person name="Andrews-Pfannkoch C."/>
            <person name="Baldwin D."/>
            <person name="Ballew R.M."/>
            <person name="Basu A."/>
            <person name="Baxendale J."/>
            <person name="Bayraktaroglu L."/>
            <person name="Beasley E.M."/>
            <person name="Beeson K.Y."/>
            <person name="Benos P.V."/>
            <person name="Berman B.P."/>
            <person name="Bhandari D."/>
            <person name="Bolshakov S."/>
            <person name="Borkova D."/>
            <person name="Botchan M.R."/>
            <person name="Bouck J."/>
            <person name="Brokstein P."/>
            <person name="Brottier P."/>
            <person name="Burtis K.C."/>
            <person name="Busam D.A."/>
            <person name="Butler H."/>
            <person name="Cadieu E."/>
            <person name="Center A."/>
            <person name="Chandra I."/>
            <person name="Cherry J.M."/>
            <person name="Cawley S."/>
            <person name="Dahlke C."/>
            <person name="Davenport L.B."/>
            <person name="Davies P."/>
            <person name="de Pablos B."/>
            <person name="Delcher A."/>
            <person name="Deng Z."/>
            <person name="Mays A.D."/>
            <person name="Dew I."/>
            <person name="Dietz S.M."/>
            <person name="Dodson K."/>
            <person name="Doup L.E."/>
            <person name="Downes M."/>
            <person name="Dugan-Rocha S."/>
            <person name="Dunkov B.C."/>
            <person name="Dunn P."/>
            <person name="Durbin K.J."/>
            <person name="Evangelista C.C."/>
            <person name="Ferraz C."/>
            <person name="Ferriera S."/>
            <person name="Fleischmann W."/>
            <person name="Fosler C."/>
            <person name="Gabrielian A.E."/>
            <person name="Garg N.S."/>
            <person name="Gelbart W.M."/>
            <person name="Glasser K."/>
            <person name="Glodek A."/>
            <person name="Gong F."/>
            <person name="Gorrell J.H."/>
            <person name="Gu Z."/>
            <person name="Guan P."/>
            <person name="Harris M."/>
            <person name="Harris N.L."/>
            <person name="Harvey D.A."/>
            <person name="Heiman T.J."/>
            <person name="Hernandez J.R."/>
            <person name="Houck J."/>
            <person name="Hostin D."/>
            <person name="Houston K.A."/>
            <person name="Howland T.J."/>
            <person name="Wei M.-H."/>
            <person name="Ibegwam C."/>
            <person name="Jalali M."/>
            <person name="Kalush F."/>
            <person name="Karpen G.H."/>
            <person name="Ke Z."/>
            <person name="Kennison J.A."/>
            <person name="Ketchum K.A."/>
            <person name="Kimmel B.E."/>
            <person name="Kodira C.D."/>
            <person name="Kraft C.L."/>
            <person name="Kravitz S."/>
            <person name="Kulp D."/>
            <person name="Lai Z."/>
            <person name="Lasko P."/>
            <person name="Lei Y."/>
            <person name="Levitsky A.A."/>
            <person name="Li J.H."/>
            <person name="Li Z."/>
            <person name="Liang Y."/>
            <person name="Lin X."/>
            <person name="Liu X."/>
            <person name="Mattei B."/>
            <person name="McIntosh T.C."/>
            <person name="McLeod M.P."/>
            <person name="McPherson D."/>
            <person name="Merkulov G."/>
            <person name="Milshina N.V."/>
            <person name="Mobarry C."/>
            <person name="Morris J."/>
            <person name="Moshrefi A."/>
            <person name="Mount S.M."/>
            <person name="Moy M."/>
            <person name="Murphy B."/>
            <person name="Murphy L."/>
            <person name="Muzny D.M."/>
            <person name="Nelson D.L."/>
            <person name="Nelson D.R."/>
            <person name="Nelson K.A."/>
            <person name="Nixon K."/>
            <person name="Nusskern D.R."/>
            <person name="Pacleb J.M."/>
            <person name="Palazzolo M."/>
            <person name="Pittman G.S."/>
            <person name="Pan S."/>
            <person name="Pollard J."/>
            <person name="Puri V."/>
            <person name="Reese M.G."/>
            <person name="Reinert K."/>
            <person name="Remington K."/>
            <person name="Saunders R.D.C."/>
            <person name="Scheeler F."/>
            <person name="Shen H."/>
            <person name="Shue B.C."/>
            <person name="Siden-Kiamos I."/>
            <person name="Simpson M."/>
            <person name="Skupski M.P."/>
            <person name="Smith T.J."/>
            <person name="Spier E."/>
            <person name="Spradling A.C."/>
            <person name="Stapleton M."/>
            <person name="Strong R."/>
            <person name="Sun E."/>
            <person name="Svirskas R."/>
            <person name="Tector C."/>
            <person name="Turner R."/>
            <person name="Venter E."/>
            <person name="Wang A.H."/>
            <person name="Wang X."/>
            <person name="Wang Z.-Y."/>
            <person name="Wassarman D.A."/>
            <person name="Weinstock G.M."/>
            <person name="Weissenbach J."/>
            <person name="Williams S.M."/>
            <person name="Woodage T."/>
            <person name="Worley K.C."/>
            <person name="Wu D."/>
            <person name="Yang S."/>
            <person name="Yao Q.A."/>
            <person name="Ye J."/>
            <person name="Yeh R.-F."/>
            <person name="Zaveri J.S."/>
            <person name="Zhan M."/>
            <person name="Zhang G."/>
            <person name="Zhao Q."/>
            <person name="Zheng L."/>
            <person name="Zheng X.H."/>
            <person name="Zhong F.N."/>
            <person name="Zhong W."/>
            <person name="Zhou X."/>
            <person name="Zhu S.C."/>
            <person name="Zhu X."/>
            <person name="Smith H.O."/>
            <person name="Gibbs R.A."/>
            <person name="Myers E.W."/>
            <person name="Rubin G.M."/>
            <person name="Venter J.C."/>
        </authorList>
    </citation>
    <scope>NUCLEOTIDE SEQUENCE [LARGE SCALE GENOMIC DNA]</scope>
    <source>
        <strain>Berkeley</strain>
    </source>
</reference>
<reference key="3">
    <citation type="journal article" date="2002" name="Genome Biol.">
        <title>Annotation of the Drosophila melanogaster euchromatic genome: a systematic review.</title>
        <authorList>
            <person name="Misra S."/>
            <person name="Crosby M.A."/>
            <person name="Mungall C.J."/>
            <person name="Matthews B.B."/>
            <person name="Campbell K.S."/>
            <person name="Hradecky P."/>
            <person name="Huang Y."/>
            <person name="Kaminker J.S."/>
            <person name="Millburn G.H."/>
            <person name="Prochnik S.E."/>
            <person name="Smith C.D."/>
            <person name="Tupy J.L."/>
            <person name="Whitfield E.J."/>
            <person name="Bayraktaroglu L."/>
            <person name="Berman B.P."/>
            <person name="Bettencourt B.R."/>
            <person name="Celniker S.E."/>
            <person name="de Grey A.D.N.J."/>
            <person name="Drysdale R.A."/>
            <person name="Harris N.L."/>
            <person name="Richter J."/>
            <person name="Russo S."/>
            <person name="Schroeder A.J."/>
            <person name="Shu S.Q."/>
            <person name="Stapleton M."/>
            <person name="Yamada C."/>
            <person name="Ashburner M."/>
            <person name="Gelbart W.M."/>
            <person name="Rubin G.M."/>
            <person name="Lewis S.E."/>
        </authorList>
    </citation>
    <scope>GENOME REANNOTATION</scope>
    <source>
        <strain>Berkeley</strain>
    </source>
</reference>
<reference key="4">
    <citation type="submission" date="2005-05" db="EMBL/GenBank/DDBJ databases">
        <authorList>
            <person name="Stapleton M."/>
            <person name="Carlson J.W."/>
            <person name="Chavez C."/>
            <person name="Frise E."/>
            <person name="George R.A."/>
            <person name="Pacleb J.M."/>
            <person name="Park S."/>
            <person name="Wan K.H."/>
            <person name="Yu C."/>
            <person name="Celniker S.E."/>
        </authorList>
    </citation>
    <scope>NUCLEOTIDE SEQUENCE [LARGE SCALE MRNA]</scope>
    <source>
        <strain>Berkeley</strain>
    </source>
</reference>
<reference key="5">
    <citation type="journal article" date="1990" name="Development">
        <title>Expression of the Drosophila gonadal gene: alternative promoters control the germ-line expression of monocistronic and bicistronic gene transcripts.</title>
        <authorList>
            <person name="Schulz R.A."/>
            <person name="Miksch J.L."/>
            <person name="Xie X.L."/>
            <person name="Cornish J.A."/>
            <person name="Galewsky S."/>
        </authorList>
    </citation>
    <scope>CHARACTERIZATION</scope>
</reference>
<protein>
    <recommendedName>
        <fullName>Gonadal protein gdl</fullName>
    </recommendedName>
</protein>
<keyword id="KW-1185">Reference proteome</keyword>
<gene>
    <name type="primary">gdl</name>
    <name type="ORF">CG7268</name>
</gene>
<comment type="tissue specificity">
    <text evidence="1">In stage 6-14 egg chamber nurse cells and oocytes of adult females and spermatocyte cysts and bundles of maturing sperm of larval, pupal and adult males.</text>
</comment>
<comment type="developmental stage">
    <text evidence="1">During oogenesis and spermatogenesis.</text>
</comment>
<comment type="similarity">
    <text evidence="2">Belongs to the gonadal family.</text>
</comment>
<evidence type="ECO:0000269" key="1">
    <source>
    </source>
</evidence>
<evidence type="ECO:0000305" key="2"/>
<feature type="chain" id="PRO_0000070263" description="Gonadal protein gdl">
    <location>
        <begin position="1"/>
        <end position="194"/>
    </location>
</feature>
<feature type="sequence conflict" description="In Ref. 1; CAB58351." evidence="2" ref="1">
    <original>Y</original>
    <variation>H</variation>
    <location>
        <position position="21"/>
    </location>
</feature>
<feature type="sequence conflict" description="In Ref. 1; CAB58351." evidence="2" ref="1">
    <original>GF</original>
    <variation>V</variation>
    <location>
        <begin position="162"/>
        <end position="163"/>
    </location>
</feature>
<feature type="sequence conflict" description="In Ref. 1; CAB58351." evidence="2" ref="1">
    <original>LSRL</original>
    <variation>FTAV</variation>
    <location>
        <begin position="185"/>
        <end position="188"/>
    </location>
</feature>
<organism>
    <name type="scientific">Drosophila melanogaster</name>
    <name type="common">Fruit fly</name>
    <dbReference type="NCBI Taxonomy" id="7227"/>
    <lineage>
        <taxon>Eukaryota</taxon>
        <taxon>Metazoa</taxon>
        <taxon>Ecdysozoa</taxon>
        <taxon>Arthropoda</taxon>
        <taxon>Hexapoda</taxon>
        <taxon>Insecta</taxon>
        <taxon>Pterygota</taxon>
        <taxon>Neoptera</taxon>
        <taxon>Endopterygota</taxon>
        <taxon>Diptera</taxon>
        <taxon>Brachycera</taxon>
        <taxon>Muscomorpha</taxon>
        <taxon>Ephydroidea</taxon>
        <taxon>Drosophilidae</taxon>
        <taxon>Drosophila</taxon>
        <taxon>Sophophora</taxon>
    </lineage>
</organism>
<proteinExistence type="evidence at protein level"/>
<accession>P22468</accession>
<accession>Q4V3J8</accession>
<accession>Q9U5V5</accession>
<accession>Q9VUP2</accession>
<name>GDL_DROME</name>
<dbReference type="EMBL" id="X58286">
    <property type="protein sequence ID" value="CAB58351.1"/>
    <property type="molecule type" value="Genomic_DNA"/>
</dbReference>
<dbReference type="EMBL" id="AE014296">
    <property type="protein sequence ID" value="AAF49633.1"/>
    <property type="molecule type" value="Genomic_DNA"/>
</dbReference>
<dbReference type="EMBL" id="BT023358">
    <property type="protein sequence ID" value="AAY55774.1"/>
    <property type="molecule type" value="mRNA"/>
</dbReference>
<dbReference type="PIR" id="S22881">
    <property type="entry name" value="S22881"/>
</dbReference>
<dbReference type="RefSeq" id="NP_001027127.1">
    <property type="nucleotide sequence ID" value="NM_001031956.2"/>
</dbReference>
<dbReference type="RefSeq" id="NP_001261877.1">
    <property type="nucleotide sequence ID" value="NM_001274948.1"/>
</dbReference>
<dbReference type="RefSeq" id="NP_001287071.1">
    <property type="nucleotide sequence ID" value="NM_001300142.1"/>
</dbReference>
<dbReference type="SMR" id="P22468"/>
<dbReference type="FunCoup" id="P22468">
    <property type="interactions" value="107"/>
</dbReference>
<dbReference type="STRING" id="7227.FBpp0306207"/>
<dbReference type="PaxDb" id="7227-FBpp0306207"/>
<dbReference type="DNASU" id="3772583"/>
<dbReference type="EnsemblMetazoa" id="FBtr0091757">
    <property type="protein sequence ID" value="FBpp0075305"/>
    <property type="gene ID" value="FBgn0001099"/>
</dbReference>
<dbReference type="EnsemblMetazoa" id="FBtr0334082">
    <property type="protein sequence ID" value="FBpp0306207"/>
    <property type="gene ID" value="FBgn0001099"/>
</dbReference>
<dbReference type="EnsemblMetazoa" id="FBtr0346516">
    <property type="protein sequence ID" value="FBpp0312134"/>
    <property type="gene ID" value="FBgn0001099"/>
</dbReference>
<dbReference type="GeneID" id="3772583"/>
<dbReference type="KEGG" id="dme:Dmel_CG33756"/>
<dbReference type="UCSC" id="CG33756-RA">
    <property type="organism name" value="d. melanogaster"/>
</dbReference>
<dbReference type="AGR" id="FB:FBgn0001099"/>
<dbReference type="CTD" id="3772583"/>
<dbReference type="FlyBase" id="FBgn0001099">
    <property type="gene designation" value="gdl"/>
</dbReference>
<dbReference type="VEuPathDB" id="VectorBase:FBgn0001099"/>
<dbReference type="eggNOG" id="KOG4810">
    <property type="taxonomic scope" value="Eukaryota"/>
</dbReference>
<dbReference type="GeneTree" id="ENSGT00390000017663"/>
<dbReference type="HOGENOM" id="CLU_096921_0_0_1"/>
<dbReference type="InParanoid" id="P22468"/>
<dbReference type="OMA" id="CVLNESI"/>
<dbReference type="OrthoDB" id="21617at2759"/>
<dbReference type="PhylomeDB" id="P22468"/>
<dbReference type="BioGRID-ORCS" id="3772583">
    <property type="hits" value="0 hits in 3 CRISPR screens"/>
</dbReference>
<dbReference type="ChiTaRS" id="Arp1">
    <property type="organism name" value="fly"/>
</dbReference>
<dbReference type="GenomeRNAi" id="3772583"/>
<dbReference type="PRO" id="PR:P22468"/>
<dbReference type="Proteomes" id="UP000000803">
    <property type="component" value="Chromosome 3L"/>
</dbReference>
<dbReference type="Bgee" id="FBgn0001099">
    <property type="expression patterns" value="Expressed in early-mid elongation-stage spermatid (Drosophila) in testis and 33 other cell types or tissues"/>
</dbReference>
<dbReference type="ExpressionAtlas" id="P22468">
    <property type="expression patterns" value="baseline and differential"/>
</dbReference>
<dbReference type="InterPro" id="IPR010849">
    <property type="entry name" value="Gonadal"/>
</dbReference>
<dbReference type="PANTHER" id="PTHR13054">
    <property type="entry name" value="DIGEORGE SYNDROME CRITICAL REGION 6 DGCR6 FAMILY MEMBER"/>
    <property type="match status" value="1"/>
</dbReference>
<dbReference type="PANTHER" id="PTHR13054:SF2">
    <property type="entry name" value="PROTEIN DGCR6"/>
    <property type="match status" value="1"/>
</dbReference>
<dbReference type="Pfam" id="PF07324">
    <property type="entry name" value="DGCR6"/>
    <property type="match status" value="1"/>
</dbReference>
<sequence>MADIPATSEGSANTSEAVVEYQQPTPEFLQRKIYFLVDQLRTYHSELPENLQTRISYDLLTELANCVLNDGIFVIVKALMELQHETERHLIKIRMQAENEYEIEVAEWRSKIKDPEELRHILGLMKIKHTKKLHESDTKIIEILDQKVNDQQSTLQKAGVPGFYVTENPKEIKIQMFLLDFILRLSRLKYEPGK</sequence>